<comment type="function">
    <text evidence="1">Succinyl-CoA synthetase functions in the citric acid cycle (TCA), coupling the hydrolysis of succinyl-CoA to the synthesis of either ATP or GTP and thus represents the only step of substrate-level phosphorylation in the TCA. The beta subunit provides nucleotide specificity of the enzyme and binds the substrate succinate, while the binding sites for coenzyme A and phosphate are found in the alpha subunit.</text>
</comment>
<comment type="catalytic activity">
    <reaction evidence="1">
        <text>succinate + ATP + CoA = succinyl-CoA + ADP + phosphate</text>
        <dbReference type="Rhea" id="RHEA:17661"/>
        <dbReference type="ChEBI" id="CHEBI:30031"/>
        <dbReference type="ChEBI" id="CHEBI:30616"/>
        <dbReference type="ChEBI" id="CHEBI:43474"/>
        <dbReference type="ChEBI" id="CHEBI:57287"/>
        <dbReference type="ChEBI" id="CHEBI:57292"/>
        <dbReference type="ChEBI" id="CHEBI:456216"/>
        <dbReference type="EC" id="6.2.1.5"/>
    </reaction>
    <physiologicalReaction direction="right-to-left" evidence="1">
        <dbReference type="Rhea" id="RHEA:17663"/>
    </physiologicalReaction>
</comment>
<comment type="catalytic activity">
    <reaction evidence="1">
        <text>GTP + succinate + CoA = succinyl-CoA + GDP + phosphate</text>
        <dbReference type="Rhea" id="RHEA:22120"/>
        <dbReference type="ChEBI" id="CHEBI:30031"/>
        <dbReference type="ChEBI" id="CHEBI:37565"/>
        <dbReference type="ChEBI" id="CHEBI:43474"/>
        <dbReference type="ChEBI" id="CHEBI:57287"/>
        <dbReference type="ChEBI" id="CHEBI:57292"/>
        <dbReference type="ChEBI" id="CHEBI:58189"/>
    </reaction>
    <physiologicalReaction direction="right-to-left" evidence="1">
        <dbReference type="Rhea" id="RHEA:22122"/>
    </physiologicalReaction>
</comment>
<comment type="cofactor">
    <cofactor evidence="1">
        <name>Mg(2+)</name>
        <dbReference type="ChEBI" id="CHEBI:18420"/>
    </cofactor>
    <text evidence="1">Binds 1 Mg(2+) ion per subunit.</text>
</comment>
<comment type="pathway">
    <text evidence="1">Carbohydrate metabolism; tricarboxylic acid cycle; succinate from succinyl-CoA (ligase route): step 1/1.</text>
</comment>
<comment type="subunit">
    <text evidence="1">Heterotetramer of two alpha and two beta subunits.</text>
</comment>
<comment type="similarity">
    <text evidence="1">Belongs to the succinate/malate CoA ligase beta subunit family.</text>
</comment>
<evidence type="ECO:0000255" key="1">
    <source>
        <dbReference type="HAMAP-Rule" id="MF_00558"/>
    </source>
</evidence>
<name>SUCC_AFIC5</name>
<accession>B6JE33</accession>
<accession>F8BYM8</accession>
<gene>
    <name evidence="1" type="primary">sucC</name>
    <name type="ordered locus">OCAR_6554</name>
    <name type="ordered locus">OCA5_c15070</name>
</gene>
<protein>
    <recommendedName>
        <fullName evidence="1">Succinate--CoA ligase [ADP-forming] subunit beta</fullName>
        <ecNumber evidence="1">6.2.1.5</ecNumber>
    </recommendedName>
    <alternativeName>
        <fullName evidence="1">Succinyl-CoA synthetase subunit beta</fullName>
        <shortName evidence="1">SCS-beta</shortName>
    </alternativeName>
</protein>
<keyword id="KW-0067">ATP-binding</keyword>
<keyword id="KW-0436">Ligase</keyword>
<keyword id="KW-0460">Magnesium</keyword>
<keyword id="KW-0479">Metal-binding</keyword>
<keyword id="KW-0547">Nucleotide-binding</keyword>
<keyword id="KW-1185">Reference proteome</keyword>
<keyword id="KW-0816">Tricarboxylic acid cycle</keyword>
<feature type="chain" id="PRO_1000129203" description="Succinate--CoA ligase [ADP-forming] subunit beta">
    <location>
        <begin position="1"/>
        <end position="398"/>
    </location>
</feature>
<feature type="domain" description="ATP-grasp" evidence="1">
    <location>
        <begin position="9"/>
        <end position="254"/>
    </location>
</feature>
<feature type="binding site" evidence="1">
    <location>
        <position position="46"/>
    </location>
    <ligand>
        <name>ATP</name>
        <dbReference type="ChEBI" id="CHEBI:30616"/>
    </ligand>
</feature>
<feature type="binding site" evidence="1">
    <location>
        <begin position="53"/>
        <end position="55"/>
    </location>
    <ligand>
        <name>ATP</name>
        <dbReference type="ChEBI" id="CHEBI:30616"/>
    </ligand>
</feature>
<feature type="binding site" evidence="1">
    <location>
        <position position="109"/>
    </location>
    <ligand>
        <name>ATP</name>
        <dbReference type="ChEBI" id="CHEBI:30616"/>
    </ligand>
</feature>
<feature type="binding site" evidence="1">
    <location>
        <position position="112"/>
    </location>
    <ligand>
        <name>ATP</name>
        <dbReference type="ChEBI" id="CHEBI:30616"/>
    </ligand>
</feature>
<feature type="binding site" evidence="1">
    <location>
        <position position="117"/>
    </location>
    <ligand>
        <name>ATP</name>
        <dbReference type="ChEBI" id="CHEBI:30616"/>
    </ligand>
</feature>
<feature type="binding site" evidence="1">
    <location>
        <position position="209"/>
    </location>
    <ligand>
        <name>Mg(2+)</name>
        <dbReference type="ChEBI" id="CHEBI:18420"/>
    </ligand>
</feature>
<feature type="binding site" evidence="1">
    <location>
        <position position="223"/>
    </location>
    <ligand>
        <name>Mg(2+)</name>
        <dbReference type="ChEBI" id="CHEBI:18420"/>
    </ligand>
</feature>
<feature type="binding site" evidence="1">
    <location>
        <position position="274"/>
    </location>
    <ligand>
        <name>substrate</name>
        <note>ligand shared with subunit alpha</note>
    </ligand>
</feature>
<feature type="binding site" evidence="1">
    <location>
        <begin position="331"/>
        <end position="333"/>
    </location>
    <ligand>
        <name>substrate</name>
        <note>ligand shared with subunit alpha</note>
    </ligand>
</feature>
<sequence>MNIHEYQAKAVLREFGVSVSKGVPILKASDAEAAAKQLGGPVWVVKSQIHAGGRGKGKFKEASAGDKGGVRLAKSIDEVKQFVDQMLGKTLVTVQTGPAGKQVNRLYLEEGADIDKEFYLSALVDRETSRIAFVVSTEGGMDIEKVAHDTPEKIVTFSVDPATGIMPHHGRKVAQALKLKGDQAKQAEKLVNQLYTAFIAKDMSMLEINPLILSKQGELRCLDAKISFDSNAIYRHPDVMELRDETEEDAKEIEASKYDLAYIALDGTIGCMVNGAGLAMATLDIIKLYGESPANFLDVGGGASEEKVTAAFKIITADPNVKGILVNIFGGIMKCDVIAAGVVAAVKAVGLKVPLVVRLEGTNVEEGKKIIRESGLNVLPADDLDDAAQKIVKAVKGK</sequence>
<reference key="1">
    <citation type="journal article" date="2008" name="J. Bacteriol.">
        <title>Genome sequence of the chemolithoautotrophic bacterium Oligotropha carboxidovorans OM5T.</title>
        <authorList>
            <person name="Paul D."/>
            <person name="Bridges S."/>
            <person name="Burgess S.C."/>
            <person name="Dandass Y."/>
            <person name="Lawrence M.L."/>
        </authorList>
    </citation>
    <scope>NUCLEOTIDE SEQUENCE [LARGE SCALE GENOMIC DNA]</scope>
    <source>
        <strain>ATCC 49405 / DSM 1227 / KCTC 32145 / OM5</strain>
    </source>
</reference>
<reference key="2">
    <citation type="journal article" date="2011" name="J. Bacteriol.">
        <title>Complete genome sequences of the chemolithoautotrophic Oligotropha carboxidovorans strains OM4 and OM5.</title>
        <authorList>
            <person name="Volland S."/>
            <person name="Rachinger M."/>
            <person name="Strittmatter A."/>
            <person name="Daniel R."/>
            <person name="Gottschalk G."/>
            <person name="Meyer O."/>
        </authorList>
    </citation>
    <scope>NUCLEOTIDE SEQUENCE [LARGE SCALE GENOMIC DNA]</scope>
    <source>
        <strain>ATCC 49405 / DSM 1227 / KCTC 32145 / OM5</strain>
    </source>
</reference>
<organism>
    <name type="scientific">Afipia carboxidovorans (strain ATCC 49405 / DSM 1227 / KCTC 32145 / OM5)</name>
    <name type="common">Oligotropha carboxidovorans</name>
    <dbReference type="NCBI Taxonomy" id="504832"/>
    <lineage>
        <taxon>Bacteria</taxon>
        <taxon>Pseudomonadati</taxon>
        <taxon>Pseudomonadota</taxon>
        <taxon>Alphaproteobacteria</taxon>
        <taxon>Hyphomicrobiales</taxon>
        <taxon>Nitrobacteraceae</taxon>
        <taxon>Afipia</taxon>
    </lineage>
</organism>
<dbReference type="EC" id="6.2.1.5" evidence="1"/>
<dbReference type="EMBL" id="CP001196">
    <property type="protein sequence ID" value="ACI93666.1"/>
    <property type="molecule type" value="Genomic_DNA"/>
</dbReference>
<dbReference type="EMBL" id="CP002826">
    <property type="protein sequence ID" value="AEI06223.1"/>
    <property type="molecule type" value="Genomic_DNA"/>
</dbReference>
<dbReference type="RefSeq" id="WP_012563692.1">
    <property type="nucleotide sequence ID" value="NC_015684.1"/>
</dbReference>
<dbReference type="SMR" id="B6JE33"/>
<dbReference type="STRING" id="504832.OCA5_c15070"/>
<dbReference type="KEGG" id="oca:OCAR_6554"/>
<dbReference type="KEGG" id="ocg:OCA5_c15070"/>
<dbReference type="PATRIC" id="fig|504832.7.peg.1603"/>
<dbReference type="eggNOG" id="COG0045">
    <property type="taxonomic scope" value="Bacteria"/>
</dbReference>
<dbReference type="HOGENOM" id="CLU_037430_0_2_5"/>
<dbReference type="OrthoDB" id="9802602at2"/>
<dbReference type="UniPathway" id="UPA00223">
    <property type="reaction ID" value="UER00999"/>
</dbReference>
<dbReference type="Proteomes" id="UP000007730">
    <property type="component" value="Chromosome"/>
</dbReference>
<dbReference type="GO" id="GO:0005829">
    <property type="term" value="C:cytosol"/>
    <property type="evidence" value="ECO:0007669"/>
    <property type="project" value="TreeGrafter"/>
</dbReference>
<dbReference type="GO" id="GO:0042709">
    <property type="term" value="C:succinate-CoA ligase complex"/>
    <property type="evidence" value="ECO:0007669"/>
    <property type="project" value="TreeGrafter"/>
</dbReference>
<dbReference type="GO" id="GO:0005524">
    <property type="term" value="F:ATP binding"/>
    <property type="evidence" value="ECO:0007669"/>
    <property type="project" value="UniProtKB-UniRule"/>
</dbReference>
<dbReference type="GO" id="GO:0000287">
    <property type="term" value="F:magnesium ion binding"/>
    <property type="evidence" value="ECO:0007669"/>
    <property type="project" value="UniProtKB-UniRule"/>
</dbReference>
<dbReference type="GO" id="GO:0004775">
    <property type="term" value="F:succinate-CoA ligase (ADP-forming) activity"/>
    <property type="evidence" value="ECO:0007669"/>
    <property type="project" value="UniProtKB-UniRule"/>
</dbReference>
<dbReference type="GO" id="GO:0004776">
    <property type="term" value="F:succinate-CoA ligase (GDP-forming) activity"/>
    <property type="evidence" value="ECO:0007669"/>
    <property type="project" value="RHEA"/>
</dbReference>
<dbReference type="GO" id="GO:0006104">
    <property type="term" value="P:succinyl-CoA metabolic process"/>
    <property type="evidence" value="ECO:0007669"/>
    <property type="project" value="TreeGrafter"/>
</dbReference>
<dbReference type="GO" id="GO:0006099">
    <property type="term" value="P:tricarboxylic acid cycle"/>
    <property type="evidence" value="ECO:0007669"/>
    <property type="project" value="UniProtKB-UniRule"/>
</dbReference>
<dbReference type="FunFam" id="3.30.1490.20:FF:000002">
    <property type="entry name" value="Succinate--CoA ligase [ADP-forming] subunit beta"/>
    <property type="match status" value="1"/>
</dbReference>
<dbReference type="FunFam" id="3.30.470.20:FF:000002">
    <property type="entry name" value="Succinate--CoA ligase [ADP-forming] subunit beta"/>
    <property type="match status" value="1"/>
</dbReference>
<dbReference type="FunFam" id="3.40.50.261:FF:000001">
    <property type="entry name" value="Succinate--CoA ligase [ADP-forming] subunit beta"/>
    <property type="match status" value="1"/>
</dbReference>
<dbReference type="Gene3D" id="3.30.1490.20">
    <property type="entry name" value="ATP-grasp fold, A domain"/>
    <property type="match status" value="1"/>
</dbReference>
<dbReference type="Gene3D" id="3.30.470.20">
    <property type="entry name" value="ATP-grasp fold, B domain"/>
    <property type="match status" value="1"/>
</dbReference>
<dbReference type="Gene3D" id="3.40.50.261">
    <property type="entry name" value="Succinyl-CoA synthetase domains"/>
    <property type="match status" value="1"/>
</dbReference>
<dbReference type="HAMAP" id="MF_00558">
    <property type="entry name" value="Succ_CoA_beta"/>
    <property type="match status" value="1"/>
</dbReference>
<dbReference type="InterPro" id="IPR011761">
    <property type="entry name" value="ATP-grasp"/>
</dbReference>
<dbReference type="InterPro" id="IPR013650">
    <property type="entry name" value="ATP-grasp_succ-CoA_synth-type"/>
</dbReference>
<dbReference type="InterPro" id="IPR013815">
    <property type="entry name" value="ATP_grasp_subdomain_1"/>
</dbReference>
<dbReference type="InterPro" id="IPR017866">
    <property type="entry name" value="Succ-CoA_synthase_bsu_CS"/>
</dbReference>
<dbReference type="InterPro" id="IPR005811">
    <property type="entry name" value="SUCC_ACL_C"/>
</dbReference>
<dbReference type="InterPro" id="IPR005809">
    <property type="entry name" value="Succ_CoA_ligase-like_bsu"/>
</dbReference>
<dbReference type="InterPro" id="IPR016102">
    <property type="entry name" value="Succinyl-CoA_synth-like"/>
</dbReference>
<dbReference type="NCBIfam" id="NF001913">
    <property type="entry name" value="PRK00696.1"/>
    <property type="match status" value="1"/>
</dbReference>
<dbReference type="NCBIfam" id="TIGR01016">
    <property type="entry name" value="sucCoAbeta"/>
    <property type="match status" value="1"/>
</dbReference>
<dbReference type="PANTHER" id="PTHR11815:SF10">
    <property type="entry name" value="SUCCINATE--COA LIGASE [GDP-FORMING] SUBUNIT BETA, MITOCHONDRIAL"/>
    <property type="match status" value="1"/>
</dbReference>
<dbReference type="PANTHER" id="PTHR11815">
    <property type="entry name" value="SUCCINYL-COA SYNTHETASE BETA CHAIN"/>
    <property type="match status" value="1"/>
</dbReference>
<dbReference type="Pfam" id="PF08442">
    <property type="entry name" value="ATP-grasp_2"/>
    <property type="match status" value="1"/>
</dbReference>
<dbReference type="Pfam" id="PF00549">
    <property type="entry name" value="Ligase_CoA"/>
    <property type="match status" value="1"/>
</dbReference>
<dbReference type="PIRSF" id="PIRSF001554">
    <property type="entry name" value="SucCS_beta"/>
    <property type="match status" value="1"/>
</dbReference>
<dbReference type="SUPFAM" id="SSF56059">
    <property type="entry name" value="Glutathione synthetase ATP-binding domain-like"/>
    <property type="match status" value="1"/>
</dbReference>
<dbReference type="SUPFAM" id="SSF52210">
    <property type="entry name" value="Succinyl-CoA synthetase domains"/>
    <property type="match status" value="1"/>
</dbReference>
<dbReference type="PROSITE" id="PS50975">
    <property type="entry name" value="ATP_GRASP"/>
    <property type="match status" value="1"/>
</dbReference>
<dbReference type="PROSITE" id="PS01217">
    <property type="entry name" value="SUCCINYL_COA_LIG_3"/>
    <property type="match status" value="1"/>
</dbReference>
<proteinExistence type="inferred from homology"/>